<evidence type="ECO:0000255" key="1">
    <source>
        <dbReference type="HAMAP-Rule" id="MF_00148"/>
    </source>
</evidence>
<sequence length="219" mass="24588">MDTWHDALGGEKQQPYFQEILNAVRQERLSGQIIYPPAADVFNAFRLTAFDRVKAVILGQDPYHGAGQAHGLAFSVRQGIRIPPSLLNIYKELETDIEGFSIPAHGCLTAWAEQGVLLLNTVLTVRAGQAHSHALLGWERFTDTVIRQLATHRKHLVFMLWGGYAQQKGRLIDSQNHLILTAPHPSPLSAYRGFFGCRHFSQANSYLSRHGIDPINWKL</sequence>
<accession>A1KU26</accession>
<dbReference type="EC" id="3.2.2.27" evidence="1"/>
<dbReference type="EMBL" id="AM421808">
    <property type="protein sequence ID" value="CAM10367.1"/>
    <property type="molecule type" value="Genomic_DNA"/>
</dbReference>
<dbReference type="RefSeq" id="WP_002224520.1">
    <property type="nucleotide sequence ID" value="NC_008767.1"/>
</dbReference>
<dbReference type="SMR" id="A1KU26"/>
<dbReference type="KEGG" id="nmc:NMC1116"/>
<dbReference type="HOGENOM" id="CLU_032162_3_0_4"/>
<dbReference type="Proteomes" id="UP000002286">
    <property type="component" value="Chromosome"/>
</dbReference>
<dbReference type="GO" id="GO:0005737">
    <property type="term" value="C:cytoplasm"/>
    <property type="evidence" value="ECO:0007669"/>
    <property type="project" value="UniProtKB-SubCell"/>
</dbReference>
<dbReference type="GO" id="GO:0004844">
    <property type="term" value="F:uracil DNA N-glycosylase activity"/>
    <property type="evidence" value="ECO:0007669"/>
    <property type="project" value="UniProtKB-UniRule"/>
</dbReference>
<dbReference type="GO" id="GO:0097510">
    <property type="term" value="P:base-excision repair, AP site formation via deaminated base removal"/>
    <property type="evidence" value="ECO:0007669"/>
    <property type="project" value="TreeGrafter"/>
</dbReference>
<dbReference type="CDD" id="cd10027">
    <property type="entry name" value="UDG-F1-like"/>
    <property type="match status" value="1"/>
</dbReference>
<dbReference type="FunFam" id="3.40.470.10:FF:000001">
    <property type="entry name" value="Uracil-DNA glycosylase"/>
    <property type="match status" value="1"/>
</dbReference>
<dbReference type="Gene3D" id="3.40.470.10">
    <property type="entry name" value="Uracil-DNA glycosylase-like domain"/>
    <property type="match status" value="1"/>
</dbReference>
<dbReference type="HAMAP" id="MF_00148">
    <property type="entry name" value="UDG"/>
    <property type="match status" value="1"/>
</dbReference>
<dbReference type="InterPro" id="IPR002043">
    <property type="entry name" value="UDG_fam1"/>
</dbReference>
<dbReference type="InterPro" id="IPR018085">
    <property type="entry name" value="Ura-DNA_Glyclase_AS"/>
</dbReference>
<dbReference type="InterPro" id="IPR005122">
    <property type="entry name" value="Uracil-DNA_glycosylase-like"/>
</dbReference>
<dbReference type="InterPro" id="IPR036895">
    <property type="entry name" value="Uracil-DNA_glycosylase-like_sf"/>
</dbReference>
<dbReference type="NCBIfam" id="NF003588">
    <property type="entry name" value="PRK05254.1-1"/>
    <property type="match status" value="1"/>
</dbReference>
<dbReference type="NCBIfam" id="NF003589">
    <property type="entry name" value="PRK05254.1-2"/>
    <property type="match status" value="1"/>
</dbReference>
<dbReference type="NCBIfam" id="NF003591">
    <property type="entry name" value="PRK05254.1-4"/>
    <property type="match status" value="1"/>
</dbReference>
<dbReference type="NCBIfam" id="NF003592">
    <property type="entry name" value="PRK05254.1-5"/>
    <property type="match status" value="1"/>
</dbReference>
<dbReference type="NCBIfam" id="TIGR00628">
    <property type="entry name" value="ung"/>
    <property type="match status" value="1"/>
</dbReference>
<dbReference type="PANTHER" id="PTHR11264">
    <property type="entry name" value="URACIL-DNA GLYCOSYLASE"/>
    <property type="match status" value="1"/>
</dbReference>
<dbReference type="PANTHER" id="PTHR11264:SF0">
    <property type="entry name" value="URACIL-DNA GLYCOSYLASE"/>
    <property type="match status" value="1"/>
</dbReference>
<dbReference type="Pfam" id="PF03167">
    <property type="entry name" value="UDG"/>
    <property type="match status" value="1"/>
</dbReference>
<dbReference type="SMART" id="SM00986">
    <property type="entry name" value="UDG"/>
    <property type="match status" value="1"/>
</dbReference>
<dbReference type="SMART" id="SM00987">
    <property type="entry name" value="UreE_C"/>
    <property type="match status" value="1"/>
</dbReference>
<dbReference type="SUPFAM" id="SSF52141">
    <property type="entry name" value="Uracil-DNA glycosylase-like"/>
    <property type="match status" value="1"/>
</dbReference>
<dbReference type="PROSITE" id="PS00130">
    <property type="entry name" value="U_DNA_GLYCOSYLASE"/>
    <property type="match status" value="1"/>
</dbReference>
<gene>
    <name evidence="1" type="primary">ung</name>
    <name type="ordered locus">NMC1116</name>
</gene>
<keyword id="KW-0963">Cytoplasm</keyword>
<keyword id="KW-0227">DNA damage</keyword>
<keyword id="KW-0234">DNA repair</keyword>
<keyword id="KW-0378">Hydrolase</keyword>
<feature type="chain" id="PRO_1000009921" description="Uracil-DNA glycosylase">
    <location>
        <begin position="1"/>
        <end position="219"/>
    </location>
</feature>
<feature type="active site" description="Proton acceptor" evidence="1">
    <location>
        <position position="61"/>
    </location>
</feature>
<protein>
    <recommendedName>
        <fullName evidence="1">Uracil-DNA glycosylase</fullName>
        <shortName evidence="1">UDG</shortName>
        <ecNumber evidence="1">3.2.2.27</ecNumber>
    </recommendedName>
</protein>
<organism>
    <name type="scientific">Neisseria meningitidis serogroup C / serotype 2a (strain ATCC 700532 / DSM 15464 / FAM18)</name>
    <dbReference type="NCBI Taxonomy" id="272831"/>
    <lineage>
        <taxon>Bacteria</taxon>
        <taxon>Pseudomonadati</taxon>
        <taxon>Pseudomonadota</taxon>
        <taxon>Betaproteobacteria</taxon>
        <taxon>Neisseriales</taxon>
        <taxon>Neisseriaceae</taxon>
        <taxon>Neisseria</taxon>
    </lineage>
</organism>
<reference key="1">
    <citation type="journal article" date="2007" name="PLoS Genet.">
        <title>Meningococcal genetic variation mechanisms viewed through comparative analysis of serogroup C strain FAM18.</title>
        <authorList>
            <person name="Bentley S.D."/>
            <person name="Vernikos G.S."/>
            <person name="Snyder L.A.S."/>
            <person name="Churcher C."/>
            <person name="Arrowsmith C."/>
            <person name="Chillingworth T."/>
            <person name="Cronin A."/>
            <person name="Davis P.H."/>
            <person name="Holroyd N.E."/>
            <person name="Jagels K."/>
            <person name="Maddison M."/>
            <person name="Moule S."/>
            <person name="Rabbinowitsch E."/>
            <person name="Sharp S."/>
            <person name="Unwin L."/>
            <person name="Whitehead S."/>
            <person name="Quail M.A."/>
            <person name="Achtman M."/>
            <person name="Barrell B.G."/>
            <person name="Saunders N.J."/>
            <person name="Parkhill J."/>
        </authorList>
    </citation>
    <scope>NUCLEOTIDE SEQUENCE [LARGE SCALE GENOMIC DNA]</scope>
    <source>
        <strain>ATCC 700532 / DSM 15464 / FAM18</strain>
    </source>
</reference>
<proteinExistence type="inferred from homology"/>
<name>UNG_NEIMF</name>
<comment type="function">
    <text evidence="1">Excises uracil residues from the DNA which can arise as a result of misincorporation of dUMP residues by DNA polymerase or due to deamination of cytosine.</text>
</comment>
<comment type="catalytic activity">
    <reaction evidence="1">
        <text>Hydrolyzes single-stranded DNA or mismatched double-stranded DNA and polynucleotides, releasing free uracil.</text>
        <dbReference type="EC" id="3.2.2.27"/>
    </reaction>
</comment>
<comment type="subcellular location">
    <subcellularLocation>
        <location evidence="1">Cytoplasm</location>
    </subcellularLocation>
</comment>
<comment type="similarity">
    <text evidence="1">Belongs to the uracil-DNA glycosylase (UDG) superfamily. UNG family.</text>
</comment>